<keyword id="KW-0028">Amino-acid biosynthesis</keyword>
<keyword id="KW-0170">Cobalt</keyword>
<keyword id="KW-0220">Diaminopimelate biosynthesis</keyword>
<keyword id="KW-0378">Hydrolase</keyword>
<keyword id="KW-0457">Lysine biosynthesis</keyword>
<keyword id="KW-0479">Metal-binding</keyword>
<keyword id="KW-0862">Zinc</keyword>
<organism>
    <name type="scientific">Escherichia coli O7:K1 (strain IAI39 / ExPEC)</name>
    <dbReference type="NCBI Taxonomy" id="585057"/>
    <lineage>
        <taxon>Bacteria</taxon>
        <taxon>Pseudomonadati</taxon>
        <taxon>Pseudomonadota</taxon>
        <taxon>Gammaproteobacteria</taxon>
        <taxon>Enterobacterales</taxon>
        <taxon>Enterobacteriaceae</taxon>
        <taxon>Escherichia</taxon>
    </lineage>
</organism>
<dbReference type="EC" id="3.5.1.18" evidence="1"/>
<dbReference type="EMBL" id="CU928164">
    <property type="protein sequence ID" value="CAR18734.1"/>
    <property type="molecule type" value="Genomic_DNA"/>
</dbReference>
<dbReference type="RefSeq" id="WP_001277791.1">
    <property type="nucleotide sequence ID" value="NC_011750.1"/>
</dbReference>
<dbReference type="RefSeq" id="YP_002408558.1">
    <property type="nucleotide sequence ID" value="NC_011750.1"/>
</dbReference>
<dbReference type="SMR" id="B7NQK9"/>
<dbReference type="STRING" id="585057.ECIAI39_2610"/>
<dbReference type="MEROPS" id="M20.010"/>
<dbReference type="KEGG" id="ect:ECIAI39_2610"/>
<dbReference type="PATRIC" id="fig|585057.6.peg.2715"/>
<dbReference type="HOGENOM" id="CLU_021802_4_0_6"/>
<dbReference type="UniPathway" id="UPA00034">
    <property type="reaction ID" value="UER00021"/>
</dbReference>
<dbReference type="Proteomes" id="UP000000749">
    <property type="component" value="Chromosome"/>
</dbReference>
<dbReference type="GO" id="GO:0008777">
    <property type="term" value="F:acetylornithine deacetylase activity"/>
    <property type="evidence" value="ECO:0007669"/>
    <property type="project" value="TreeGrafter"/>
</dbReference>
<dbReference type="GO" id="GO:0050897">
    <property type="term" value="F:cobalt ion binding"/>
    <property type="evidence" value="ECO:0007669"/>
    <property type="project" value="UniProtKB-UniRule"/>
</dbReference>
<dbReference type="GO" id="GO:0009014">
    <property type="term" value="F:succinyl-diaminopimelate desuccinylase activity"/>
    <property type="evidence" value="ECO:0007669"/>
    <property type="project" value="UniProtKB-UniRule"/>
</dbReference>
<dbReference type="GO" id="GO:0008270">
    <property type="term" value="F:zinc ion binding"/>
    <property type="evidence" value="ECO:0007669"/>
    <property type="project" value="UniProtKB-UniRule"/>
</dbReference>
<dbReference type="GO" id="GO:0019877">
    <property type="term" value="P:diaminopimelate biosynthetic process"/>
    <property type="evidence" value="ECO:0007669"/>
    <property type="project" value="UniProtKB-UniRule"/>
</dbReference>
<dbReference type="GO" id="GO:0006526">
    <property type="term" value="P:L-arginine biosynthetic process"/>
    <property type="evidence" value="ECO:0007669"/>
    <property type="project" value="TreeGrafter"/>
</dbReference>
<dbReference type="GO" id="GO:0009089">
    <property type="term" value="P:lysine biosynthetic process via diaminopimelate"/>
    <property type="evidence" value="ECO:0007669"/>
    <property type="project" value="UniProtKB-UniRule"/>
</dbReference>
<dbReference type="CDD" id="cd03891">
    <property type="entry name" value="M20_DapE_proteobac"/>
    <property type="match status" value="1"/>
</dbReference>
<dbReference type="FunFam" id="3.30.70.360:FF:000011">
    <property type="entry name" value="Succinyl-diaminopimelate desuccinylase"/>
    <property type="match status" value="1"/>
</dbReference>
<dbReference type="FunFam" id="3.40.630.10:FF:000005">
    <property type="entry name" value="Succinyl-diaminopimelate desuccinylase"/>
    <property type="match status" value="1"/>
</dbReference>
<dbReference type="FunFam" id="3.40.630.10:FF:000010">
    <property type="entry name" value="Succinyl-diaminopimelate desuccinylase"/>
    <property type="match status" value="1"/>
</dbReference>
<dbReference type="Gene3D" id="3.40.630.10">
    <property type="entry name" value="Zn peptidases"/>
    <property type="match status" value="2"/>
</dbReference>
<dbReference type="HAMAP" id="MF_01690">
    <property type="entry name" value="DapE"/>
    <property type="match status" value="1"/>
</dbReference>
<dbReference type="InterPro" id="IPR001261">
    <property type="entry name" value="ArgE/DapE_CS"/>
</dbReference>
<dbReference type="InterPro" id="IPR036264">
    <property type="entry name" value="Bact_exopeptidase_dim_dom"/>
</dbReference>
<dbReference type="InterPro" id="IPR005941">
    <property type="entry name" value="DapE_proteobac"/>
</dbReference>
<dbReference type="InterPro" id="IPR002933">
    <property type="entry name" value="Peptidase_M20"/>
</dbReference>
<dbReference type="InterPro" id="IPR011650">
    <property type="entry name" value="Peptidase_M20_dimer"/>
</dbReference>
<dbReference type="InterPro" id="IPR050072">
    <property type="entry name" value="Peptidase_M20A"/>
</dbReference>
<dbReference type="NCBIfam" id="TIGR01246">
    <property type="entry name" value="dapE_proteo"/>
    <property type="match status" value="1"/>
</dbReference>
<dbReference type="NCBIfam" id="NF009557">
    <property type="entry name" value="PRK13009.1"/>
    <property type="match status" value="1"/>
</dbReference>
<dbReference type="PANTHER" id="PTHR43808">
    <property type="entry name" value="ACETYLORNITHINE DEACETYLASE"/>
    <property type="match status" value="1"/>
</dbReference>
<dbReference type="PANTHER" id="PTHR43808:SF31">
    <property type="entry name" value="N-ACETYL-L-CITRULLINE DEACETYLASE"/>
    <property type="match status" value="1"/>
</dbReference>
<dbReference type="Pfam" id="PF07687">
    <property type="entry name" value="M20_dimer"/>
    <property type="match status" value="1"/>
</dbReference>
<dbReference type="Pfam" id="PF01546">
    <property type="entry name" value="Peptidase_M20"/>
    <property type="match status" value="1"/>
</dbReference>
<dbReference type="SUPFAM" id="SSF55031">
    <property type="entry name" value="Bacterial exopeptidase dimerisation domain"/>
    <property type="match status" value="1"/>
</dbReference>
<dbReference type="SUPFAM" id="SSF53187">
    <property type="entry name" value="Zn-dependent exopeptidases"/>
    <property type="match status" value="1"/>
</dbReference>
<dbReference type="PROSITE" id="PS00758">
    <property type="entry name" value="ARGE_DAPE_CPG2_1"/>
    <property type="match status" value="1"/>
</dbReference>
<dbReference type="PROSITE" id="PS00759">
    <property type="entry name" value="ARGE_DAPE_CPG2_2"/>
    <property type="match status" value="1"/>
</dbReference>
<sequence length="375" mass="41239">MSCPVIELTQQLIRRPSLSPDDAGCQALLIERLQAIGFTVERMDFADTQNFWAWRGQGETLAFAGHTDVVPPGDADRWINPPFEPTIRDGMLFGRGAADMKGSLAAMVVAAERFVAQHPNHAGRLAFLITSDEEASAHNGTVKVVEALMARNERLDYCLVGEPSSIEVVGDVVKNGRRGSLTCNLTIHGVQGHVAYPHLADNPVHRAAPFLNELVAIEWDQGNEFFPATSMQIANIQAGTGSNNVIPGELFVQFNFRFSTELTDEMIKAQVLALLEKHQLRYTVDWWLSGQPFLTARGKLVDAVVNAVEHYNEIKPQLLTTGGTSDGRFIARMGAQVVELGPVNATIHKINECVNAADLQLLARMYQRIMEQLVA</sequence>
<accession>B7NQK9</accession>
<protein>
    <recommendedName>
        <fullName evidence="1">Succinyl-diaminopimelate desuccinylase</fullName>
        <shortName evidence="1">SDAP desuccinylase</shortName>
        <ecNumber evidence="1">3.5.1.18</ecNumber>
    </recommendedName>
    <alternativeName>
        <fullName evidence="1">N-succinyl-LL-2,6-diaminoheptanedioate amidohydrolase</fullName>
    </alternativeName>
</protein>
<reference key="1">
    <citation type="journal article" date="2009" name="PLoS Genet.">
        <title>Organised genome dynamics in the Escherichia coli species results in highly diverse adaptive paths.</title>
        <authorList>
            <person name="Touchon M."/>
            <person name="Hoede C."/>
            <person name="Tenaillon O."/>
            <person name="Barbe V."/>
            <person name="Baeriswyl S."/>
            <person name="Bidet P."/>
            <person name="Bingen E."/>
            <person name="Bonacorsi S."/>
            <person name="Bouchier C."/>
            <person name="Bouvet O."/>
            <person name="Calteau A."/>
            <person name="Chiapello H."/>
            <person name="Clermont O."/>
            <person name="Cruveiller S."/>
            <person name="Danchin A."/>
            <person name="Diard M."/>
            <person name="Dossat C."/>
            <person name="Karoui M.E."/>
            <person name="Frapy E."/>
            <person name="Garry L."/>
            <person name="Ghigo J.M."/>
            <person name="Gilles A.M."/>
            <person name="Johnson J."/>
            <person name="Le Bouguenec C."/>
            <person name="Lescat M."/>
            <person name="Mangenot S."/>
            <person name="Martinez-Jehanne V."/>
            <person name="Matic I."/>
            <person name="Nassif X."/>
            <person name="Oztas S."/>
            <person name="Petit M.A."/>
            <person name="Pichon C."/>
            <person name="Rouy Z."/>
            <person name="Ruf C.S."/>
            <person name="Schneider D."/>
            <person name="Tourret J."/>
            <person name="Vacherie B."/>
            <person name="Vallenet D."/>
            <person name="Medigue C."/>
            <person name="Rocha E.P.C."/>
            <person name="Denamur E."/>
        </authorList>
    </citation>
    <scope>NUCLEOTIDE SEQUENCE [LARGE SCALE GENOMIC DNA]</scope>
    <source>
        <strain>IAI39 / ExPEC</strain>
    </source>
</reference>
<comment type="function">
    <text evidence="1">Catalyzes the hydrolysis of N-succinyl-L,L-diaminopimelic acid (SDAP), forming succinate and LL-2,6-diaminopimelate (DAP), an intermediate involved in the bacterial biosynthesis of lysine and meso-diaminopimelic acid, an essential component of bacterial cell walls.</text>
</comment>
<comment type="catalytic activity">
    <reaction evidence="1">
        <text>N-succinyl-(2S,6S)-2,6-diaminopimelate + H2O = (2S,6S)-2,6-diaminopimelate + succinate</text>
        <dbReference type="Rhea" id="RHEA:22608"/>
        <dbReference type="ChEBI" id="CHEBI:15377"/>
        <dbReference type="ChEBI" id="CHEBI:30031"/>
        <dbReference type="ChEBI" id="CHEBI:57609"/>
        <dbReference type="ChEBI" id="CHEBI:58087"/>
        <dbReference type="EC" id="3.5.1.18"/>
    </reaction>
</comment>
<comment type="cofactor">
    <cofactor evidence="1">
        <name>Zn(2+)</name>
        <dbReference type="ChEBI" id="CHEBI:29105"/>
    </cofactor>
    <cofactor evidence="1">
        <name>Co(2+)</name>
        <dbReference type="ChEBI" id="CHEBI:48828"/>
    </cofactor>
    <text evidence="1">Binds 2 Zn(2+) or Co(2+) ions per subunit.</text>
</comment>
<comment type="pathway">
    <text evidence="1">Amino-acid biosynthesis; L-lysine biosynthesis via DAP pathway; LL-2,6-diaminopimelate from (S)-tetrahydrodipicolinate (succinylase route): step 3/3.</text>
</comment>
<comment type="subunit">
    <text evidence="1">Homodimer.</text>
</comment>
<comment type="similarity">
    <text evidence="1">Belongs to the peptidase M20A family. DapE subfamily.</text>
</comment>
<feature type="chain" id="PRO_0000375568" description="Succinyl-diaminopimelate desuccinylase">
    <location>
        <begin position="1"/>
        <end position="375"/>
    </location>
</feature>
<feature type="active site" evidence="1">
    <location>
        <position position="68"/>
    </location>
</feature>
<feature type="active site" description="Proton acceptor" evidence="1">
    <location>
        <position position="133"/>
    </location>
</feature>
<feature type="binding site" evidence="1">
    <location>
        <position position="66"/>
    </location>
    <ligand>
        <name>Zn(2+)</name>
        <dbReference type="ChEBI" id="CHEBI:29105"/>
        <label>1</label>
    </ligand>
</feature>
<feature type="binding site" evidence="1">
    <location>
        <position position="99"/>
    </location>
    <ligand>
        <name>Zn(2+)</name>
        <dbReference type="ChEBI" id="CHEBI:29105"/>
        <label>1</label>
    </ligand>
</feature>
<feature type="binding site" evidence="1">
    <location>
        <position position="99"/>
    </location>
    <ligand>
        <name>Zn(2+)</name>
        <dbReference type="ChEBI" id="CHEBI:29105"/>
        <label>2</label>
    </ligand>
</feature>
<feature type="binding site" evidence="1">
    <location>
        <position position="134"/>
    </location>
    <ligand>
        <name>Zn(2+)</name>
        <dbReference type="ChEBI" id="CHEBI:29105"/>
        <label>2</label>
    </ligand>
</feature>
<feature type="binding site" evidence="1">
    <location>
        <position position="162"/>
    </location>
    <ligand>
        <name>Zn(2+)</name>
        <dbReference type="ChEBI" id="CHEBI:29105"/>
        <label>1</label>
    </ligand>
</feature>
<feature type="binding site" evidence="1">
    <location>
        <position position="348"/>
    </location>
    <ligand>
        <name>Zn(2+)</name>
        <dbReference type="ChEBI" id="CHEBI:29105"/>
        <label>2</label>
    </ligand>
</feature>
<gene>
    <name evidence="1" type="primary">dapE</name>
    <name type="ordered locus">ECIAI39_2610</name>
</gene>
<name>DAPE_ECO7I</name>
<proteinExistence type="inferred from homology"/>
<evidence type="ECO:0000255" key="1">
    <source>
        <dbReference type="HAMAP-Rule" id="MF_01690"/>
    </source>
</evidence>